<name>RL10_ROSS1</name>
<evidence type="ECO:0000255" key="1">
    <source>
        <dbReference type="HAMAP-Rule" id="MF_00362"/>
    </source>
</evidence>
<evidence type="ECO:0000305" key="2"/>
<comment type="function">
    <text evidence="1">Forms part of the ribosomal stalk, playing a central role in the interaction of the ribosome with GTP-bound translation factors.</text>
</comment>
<comment type="subunit">
    <text evidence="1">Part of the ribosomal stalk of the 50S ribosomal subunit. The N-terminus interacts with L11 and the large rRNA to form the base of the stalk. The C-terminus forms an elongated spine to which L12 dimers bind in a sequential fashion forming a multimeric L10(L12)X complex.</text>
</comment>
<comment type="similarity">
    <text evidence="1">Belongs to the universal ribosomal protein uL10 family.</text>
</comment>
<feature type="chain" id="PRO_1000005583" description="Large ribosomal subunit protein uL10">
    <location>
        <begin position="1"/>
        <end position="186"/>
    </location>
</feature>
<proteinExistence type="inferred from homology"/>
<reference key="1">
    <citation type="submission" date="2007-04" db="EMBL/GenBank/DDBJ databases">
        <title>Complete sequence of Roseiflexus sp. RS-1.</title>
        <authorList>
            <consortium name="US DOE Joint Genome Institute"/>
            <person name="Copeland A."/>
            <person name="Lucas S."/>
            <person name="Lapidus A."/>
            <person name="Barry K."/>
            <person name="Detter J.C."/>
            <person name="Glavina del Rio T."/>
            <person name="Hammon N."/>
            <person name="Israni S."/>
            <person name="Dalin E."/>
            <person name="Tice H."/>
            <person name="Pitluck S."/>
            <person name="Chertkov O."/>
            <person name="Brettin T."/>
            <person name="Bruce D."/>
            <person name="Han C."/>
            <person name="Schmutz J."/>
            <person name="Larimer F."/>
            <person name="Land M."/>
            <person name="Hauser L."/>
            <person name="Kyrpides N."/>
            <person name="Mikhailova N."/>
            <person name="Bryant D.A."/>
            <person name="Richardson P."/>
        </authorList>
    </citation>
    <scope>NUCLEOTIDE SEQUENCE [LARGE SCALE GENOMIC DNA]</scope>
    <source>
        <strain>RS-1</strain>
    </source>
</reference>
<organism>
    <name type="scientific">Roseiflexus sp. (strain RS-1)</name>
    <dbReference type="NCBI Taxonomy" id="357808"/>
    <lineage>
        <taxon>Bacteria</taxon>
        <taxon>Bacillati</taxon>
        <taxon>Chloroflexota</taxon>
        <taxon>Chloroflexia</taxon>
        <taxon>Chloroflexales</taxon>
        <taxon>Roseiflexineae</taxon>
        <taxon>Roseiflexaceae</taxon>
        <taxon>Roseiflexus</taxon>
    </lineage>
</organism>
<sequence length="186" mass="19986">MPTQRKIETVADLKQRLKRMQVTVVADYRGLSVADMTELRKKLRESGAEFVVAKNTLTLIAARETGHEAIEPLLAGPTALAFAYDDVPKFVKAINEFNRGPKKIIVRGGLVGTMLLNENVLDTVASLPTKEEVRAQVLGGLAAPVTGLAGIIAAPVNDIVNLLDATSKSILYALQARIDQLQPSAS</sequence>
<dbReference type="EMBL" id="CP000686">
    <property type="protein sequence ID" value="ABQ91689.1"/>
    <property type="molecule type" value="Genomic_DNA"/>
</dbReference>
<dbReference type="RefSeq" id="WP_011958032.1">
    <property type="nucleotide sequence ID" value="NC_009523.1"/>
</dbReference>
<dbReference type="SMR" id="A5UYI6"/>
<dbReference type="STRING" id="357808.RoseRS_3328"/>
<dbReference type="KEGG" id="rrs:RoseRS_3328"/>
<dbReference type="eggNOG" id="COG0244">
    <property type="taxonomic scope" value="Bacteria"/>
</dbReference>
<dbReference type="HOGENOM" id="CLU_092227_0_0_0"/>
<dbReference type="OrthoDB" id="9808307at2"/>
<dbReference type="Proteomes" id="UP000006554">
    <property type="component" value="Chromosome"/>
</dbReference>
<dbReference type="GO" id="GO:0015934">
    <property type="term" value="C:large ribosomal subunit"/>
    <property type="evidence" value="ECO:0007669"/>
    <property type="project" value="InterPro"/>
</dbReference>
<dbReference type="GO" id="GO:0070180">
    <property type="term" value="F:large ribosomal subunit rRNA binding"/>
    <property type="evidence" value="ECO:0007669"/>
    <property type="project" value="UniProtKB-UniRule"/>
</dbReference>
<dbReference type="GO" id="GO:0003735">
    <property type="term" value="F:structural constituent of ribosome"/>
    <property type="evidence" value="ECO:0007669"/>
    <property type="project" value="InterPro"/>
</dbReference>
<dbReference type="GO" id="GO:0006412">
    <property type="term" value="P:translation"/>
    <property type="evidence" value="ECO:0007669"/>
    <property type="project" value="UniProtKB-UniRule"/>
</dbReference>
<dbReference type="CDD" id="cd05797">
    <property type="entry name" value="Ribosomal_L10"/>
    <property type="match status" value="1"/>
</dbReference>
<dbReference type="Gene3D" id="3.30.70.1730">
    <property type="match status" value="1"/>
</dbReference>
<dbReference type="Gene3D" id="6.10.250.290">
    <property type="match status" value="1"/>
</dbReference>
<dbReference type="HAMAP" id="MF_00362">
    <property type="entry name" value="Ribosomal_uL10"/>
    <property type="match status" value="1"/>
</dbReference>
<dbReference type="InterPro" id="IPR001790">
    <property type="entry name" value="Ribosomal_uL10"/>
</dbReference>
<dbReference type="InterPro" id="IPR043141">
    <property type="entry name" value="Ribosomal_uL10-like_sf"/>
</dbReference>
<dbReference type="InterPro" id="IPR022973">
    <property type="entry name" value="Ribosomal_uL10_bac"/>
</dbReference>
<dbReference type="InterPro" id="IPR047865">
    <property type="entry name" value="Ribosomal_uL10_bac_type"/>
</dbReference>
<dbReference type="InterPro" id="IPR002363">
    <property type="entry name" value="Ribosomal_uL10_CS_bac"/>
</dbReference>
<dbReference type="NCBIfam" id="NF000955">
    <property type="entry name" value="PRK00099.1-1"/>
    <property type="match status" value="1"/>
</dbReference>
<dbReference type="PANTHER" id="PTHR11560">
    <property type="entry name" value="39S RIBOSOMAL PROTEIN L10, MITOCHONDRIAL"/>
    <property type="match status" value="1"/>
</dbReference>
<dbReference type="Pfam" id="PF00466">
    <property type="entry name" value="Ribosomal_L10"/>
    <property type="match status" value="1"/>
</dbReference>
<dbReference type="SUPFAM" id="SSF160369">
    <property type="entry name" value="Ribosomal protein L10-like"/>
    <property type="match status" value="1"/>
</dbReference>
<dbReference type="PROSITE" id="PS01109">
    <property type="entry name" value="RIBOSOMAL_L10"/>
    <property type="match status" value="1"/>
</dbReference>
<protein>
    <recommendedName>
        <fullName evidence="1">Large ribosomal subunit protein uL10</fullName>
    </recommendedName>
    <alternativeName>
        <fullName evidence="2">50S ribosomal protein L10</fullName>
    </alternativeName>
</protein>
<keyword id="KW-0687">Ribonucleoprotein</keyword>
<keyword id="KW-0689">Ribosomal protein</keyword>
<keyword id="KW-0694">RNA-binding</keyword>
<keyword id="KW-0699">rRNA-binding</keyword>
<accession>A5UYI6</accession>
<gene>
    <name evidence="1" type="primary">rplJ</name>
    <name type="ordered locus">RoseRS_3328</name>
</gene>